<comment type="function">
    <text evidence="1">Catalyzes the NADPH-dependent reduction of glyoxylate and hydroxypyruvate into glycolate and glycerate, respectively.</text>
</comment>
<comment type="catalytic activity">
    <reaction evidence="1">
        <text>glycolate + NADP(+) = glyoxylate + NADPH + H(+)</text>
        <dbReference type="Rhea" id="RHEA:10992"/>
        <dbReference type="ChEBI" id="CHEBI:15378"/>
        <dbReference type="ChEBI" id="CHEBI:29805"/>
        <dbReference type="ChEBI" id="CHEBI:36655"/>
        <dbReference type="ChEBI" id="CHEBI:57783"/>
        <dbReference type="ChEBI" id="CHEBI:58349"/>
        <dbReference type="EC" id="1.1.1.79"/>
    </reaction>
</comment>
<comment type="catalytic activity">
    <reaction evidence="1">
        <text>(R)-glycerate + NAD(+) = 3-hydroxypyruvate + NADH + H(+)</text>
        <dbReference type="Rhea" id="RHEA:17905"/>
        <dbReference type="ChEBI" id="CHEBI:15378"/>
        <dbReference type="ChEBI" id="CHEBI:16659"/>
        <dbReference type="ChEBI" id="CHEBI:17180"/>
        <dbReference type="ChEBI" id="CHEBI:57540"/>
        <dbReference type="ChEBI" id="CHEBI:57945"/>
        <dbReference type="EC" id="1.1.1.81"/>
    </reaction>
</comment>
<comment type="catalytic activity">
    <reaction evidence="1">
        <text>(R)-glycerate + NADP(+) = 3-hydroxypyruvate + NADPH + H(+)</text>
        <dbReference type="Rhea" id="RHEA:18657"/>
        <dbReference type="ChEBI" id="CHEBI:15378"/>
        <dbReference type="ChEBI" id="CHEBI:16659"/>
        <dbReference type="ChEBI" id="CHEBI:17180"/>
        <dbReference type="ChEBI" id="CHEBI:57783"/>
        <dbReference type="ChEBI" id="CHEBI:58349"/>
        <dbReference type="EC" id="1.1.1.81"/>
    </reaction>
</comment>
<comment type="subunit">
    <text evidence="1">Homodimer.</text>
</comment>
<comment type="subcellular location">
    <subcellularLocation>
        <location evidence="1">Cytoplasm</location>
    </subcellularLocation>
</comment>
<comment type="similarity">
    <text evidence="1">Belongs to the D-isomer specific 2-hydroxyacid dehydrogenase family. GhrB subfamily.</text>
</comment>
<accession>A7ZTA0</accession>
<name>GHRB_ECO24</name>
<protein>
    <recommendedName>
        <fullName evidence="1">Glyoxylate/hydroxypyruvate reductase B</fullName>
        <ecNumber evidence="1">1.1.1.79</ecNumber>
        <ecNumber evidence="1">1.1.1.81</ecNumber>
    </recommendedName>
</protein>
<sequence length="324" mass="35396">MKPSVILYKALPDDLLQRLQEHFTVHQVANLSPQTVEQNAAIFAEAEGLLGSNENVDAALLEKMPKLRATSTISVGYDNFDVDALTARKILLMHTPTVLTETVADTLMALVLSTARRVVEVAERVKAGEWTASIGPDWYGTDVHHKTLGIVGMGRIGMALAQRAHFGFNMPILYNARRHHKEAEERFNARYCDLDTLLQESDFVCLILPLTDETHHLFGAEQFAKMKSSAIFINAGRGPVVDENALIAALQKGEIHAAGLDVFEQEPLSVDSPLLSMANVVAVPHIGSATHETRYGMAACAVDNLIDALQGKVEKNCVNPHVAD</sequence>
<evidence type="ECO:0000255" key="1">
    <source>
        <dbReference type="HAMAP-Rule" id="MF_01667"/>
    </source>
</evidence>
<keyword id="KW-0963">Cytoplasm</keyword>
<keyword id="KW-0520">NAD</keyword>
<keyword id="KW-0521">NADP</keyword>
<keyword id="KW-0560">Oxidoreductase</keyword>
<keyword id="KW-1185">Reference proteome</keyword>
<feature type="chain" id="PRO_0000348387" description="Glyoxylate/hydroxypyruvate reductase B">
    <location>
        <begin position="1"/>
        <end position="324"/>
    </location>
</feature>
<feature type="active site" evidence="1">
    <location>
        <position position="237"/>
    </location>
</feature>
<feature type="active site" evidence="1">
    <location>
        <position position="266"/>
    </location>
</feature>
<feature type="active site" description="Proton donor" evidence="1">
    <location>
        <position position="285"/>
    </location>
</feature>
<dbReference type="EC" id="1.1.1.79" evidence="1"/>
<dbReference type="EC" id="1.1.1.81" evidence="1"/>
<dbReference type="EMBL" id="CP000800">
    <property type="protein sequence ID" value="ABV17627.1"/>
    <property type="molecule type" value="Genomic_DNA"/>
</dbReference>
<dbReference type="RefSeq" id="WP_000805027.1">
    <property type="nucleotide sequence ID" value="NC_009801.1"/>
</dbReference>
<dbReference type="SMR" id="A7ZTA0"/>
<dbReference type="GeneID" id="75203026"/>
<dbReference type="KEGG" id="ecw:EcE24377A_4049"/>
<dbReference type="HOGENOM" id="CLU_019796_1_2_6"/>
<dbReference type="Proteomes" id="UP000001122">
    <property type="component" value="Chromosome"/>
</dbReference>
<dbReference type="GO" id="GO:0005829">
    <property type="term" value="C:cytosol"/>
    <property type="evidence" value="ECO:0007669"/>
    <property type="project" value="UniProtKB-ARBA"/>
</dbReference>
<dbReference type="GO" id="GO:0005886">
    <property type="term" value="C:plasma membrane"/>
    <property type="evidence" value="ECO:0007669"/>
    <property type="project" value="UniProtKB-UniRule"/>
</dbReference>
<dbReference type="GO" id="GO:0030267">
    <property type="term" value="F:glyoxylate reductase (NADPH) activity"/>
    <property type="evidence" value="ECO:0007669"/>
    <property type="project" value="UniProtKB-UniRule"/>
</dbReference>
<dbReference type="GO" id="GO:0008465">
    <property type="term" value="F:hydroxypyruvate reductase (NADH) activity"/>
    <property type="evidence" value="ECO:0007669"/>
    <property type="project" value="RHEA"/>
</dbReference>
<dbReference type="GO" id="GO:0120509">
    <property type="term" value="F:hydroxypyruvate reductase (NADPH) activity"/>
    <property type="evidence" value="ECO:0007669"/>
    <property type="project" value="RHEA"/>
</dbReference>
<dbReference type="GO" id="GO:0051287">
    <property type="term" value="F:NAD binding"/>
    <property type="evidence" value="ECO:0007669"/>
    <property type="project" value="InterPro"/>
</dbReference>
<dbReference type="CDD" id="cd05301">
    <property type="entry name" value="GDH"/>
    <property type="match status" value="1"/>
</dbReference>
<dbReference type="FunFam" id="3.40.50.720:FF:000026">
    <property type="entry name" value="Glyoxylate/hydroxypyruvate reductase B"/>
    <property type="match status" value="1"/>
</dbReference>
<dbReference type="Gene3D" id="3.40.50.720">
    <property type="entry name" value="NAD(P)-binding Rossmann-like Domain"/>
    <property type="match status" value="2"/>
</dbReference>
<dbReference type="HAMAP" id="MF_01667">
    <property type="entry name" value="2_Hacid_dh_C_GhrB"/>
    <property type="match status" value="1"/>
</dbReference>
<dbReference type="InterPro" id="IPR050223">
    <property type="entry name" value="D-isomer_2-hydroxyacid_DH"/>
</dbReference>
<dbReference type="InterPro" id="IPR006139">
    <property type="entry name" value="D-isomer_2_OHA_DH_cat_dom"/>
</dbReference>
<dbReference type="InterPro" id="IPR029753">
    <property type="entry name" value="D-isomer_DH_CS"/>
</dbReference>
<dbReference type="InterPro" id="IPR006140">
    <property type="entry name" value="D-isomer_DH_NAD-bd"/>
</dbReference>
<dbReference type="InterPro" id="IPR023756">
    <property type="entry name" value="Glyo/OHPyrv_Rdtase_B"/>
</dbReference>
<dbReference type="InterPro" id="IPR036291">
    <property type="entry name" value="NAD(P)-bd_dom_sf"/>
</dbReference>
<dbReference type="NCBIfam" id="NF011938">
    <property type="entry name" value="PRK15409.1"/>
    <property type="match status" value="1"/>
</dbReference>
<dbReference type="PANTHER" id="PTHR10996">
    <property type="entry name" value="2-HYDROXYACID DEHYDROGENASE-RELATED"/>
    <property type="match status" value="1"/>
</dbReference>
<dbReference type="PANTHER" id="PTHR10996:SF283">
    <property type="entry name" value="GLYOXYLATE_HYDROXYPYRUVATE REDUCTASE B"/>
    <property type="match status" value="1"/>
</dbReference>
<dbReference type="Pfam" id="PF00389">
    <property type="entry name" value="2-Hacid_dh"/>
    <property type="match status" value="1"/>
</dbReference>
<dbReference type="Pfam" id="PF02826">
    <property type="entry name" value="2-Hacid_dh_C"/>
    <property type="match status" value="1"/>
</dbReference>
<dbReference type="SUPFAM" id="SSF52283">
    <property type="entry name" value="Formate/glycerate dehydrogenase catalytic domain-like"/>
    <property type="match status" value="1"/>
</dbReference>
<dbReference type="SUPFAM" id="SSF51735">
    <property type="entry name" value="NAD(P)-binding Rossmann-fold domains"/>
    <property type="match status" value="1"/>
</dbReference>
<dbReference type="PROSITE" id="PS00670">
    <property type="entry name" value="D_2_HYDROXYACID_DH_2"/>
    <property type="match status" value="1"/>
</dbReference>
<dbReference type="PROSITE" id="PS00671">
    <property type="entry name" value="D_2_HYDROXYACID_DH_3"/>
    <property type="match status" value="1"/>
</dbReference>
<proteinExistence type="inferred from homology"/>
<organism>
    <name type="scientific">Escherichia coli O139:H28 (strain E24377A / ETEC)</name>
    <dbReference type="NCBI Taxonomy" id="331111"/>
    <lineage>
        <taxon>Bacteria</taxon>
        <taxon>Pseudomonadati</taxon>
        <taxon>Pseudomonadota</taxon>
        <taxon>Gammaproteobacteria</taxon>
        <taxon>Enterobacterales</taxon>
        <taxon>Enterobacteriaceae</taxon>
        <taxon>Escherichia</taxon>
    </lineage>
</organism>
<reference key="1">
    <citation type="journal article" date="2008" name="J. Bacteriol.">
        <title>The pangenome structure of Escherichia coli: comparative genomic analysis of E. coli commensal and pathogenic isolates.</title>
        <authorList>
            <person name="Rasko D.A."/>
            <person name="Rosovitz M.J."/>
            <person name="Myers G.S.A."/>
            <person name="Mongodin E.F."/>
            <person name="Fricke W.F."/>
            <person name="Gajer P."/>
            <person name="Crabtree J."/>
            <person name="Sebaihia M."/>
            <person name="Thomson N.R."/>
            <person name="Chaudhuri R."/>
            <person name="Henderson I.R."/>
            <person name="Sperandio V."/>
            <person name="Ravel J."/>
        </authorList>
    </citation>
    <scope>NUCLEOTIDE SEQUENCE [LARGE SCALE GENOMIC DNA]</scope>
    <source>
        <strain>E24377A / ETEC</strain>
    </source>
</reference>
<gene>
    <name evidence="1" type="primary">ghrB</name>
    <name type="ordered locus">EcE24377A_4049</name>
</gene>